<name>TIG_BACC0</name>
<keyword id="KW-0131">Cell cycle</keyword>
<keyword id="KW-0132">Cell division</keyword>
<keyword id="KW-0143">Chaperone</keyword>
<keyword id="KW-0963">Cytoplasm</keyword>
<keyword id="KW-0413">Isomerase</keyword>
<keyword id="KW-0697">Rotamase</keyword>
<dbReference type="EC" id="5.2.1.8" evidence="1"/>
<dbReference type="EMBL" id="CP001283">
    <property type="protein sequence ID" value="ACK90262.1"/>
    <property type="molecule type" value="Genomic_DNA"/>
</dbReference>
<dbReference type="RefSeq" id="WP_000729253.1">
    <property type="nucleotide sequence ID" value="NC_011773.1"/>
</dbReference>
<dbReference type="SMR" id="B7JQ66"/>
<dbReference type="GeneID" id="45024345"/>
<dbReference type="KEGG" id="bcu:BCAH820_4560"/>
<dbReference type="HOGENOM" id="CLU_033058_3_2_9"/>
<dbReference type="Proteomes" id="UP000001363">
    <property type="component" value="Chromosome"/>
</dbReference>
<dbReference type="GO" id="GO:0005737">
    <property type="term" value="C:cytoplasm"/>
    <property type="evidence" value="ECO:0007669"/>
    <property type="project" value="UniProtKB-SubCell"/>
</dbReference>
<dbReference type="GO" id="GO:0003755">
    <property type="term" value="F:peptidyl-prolyl cis-trans isomerase activity"/>
    <property type="evidence" value="ECO:0007669"/>
    <property type="project" value="UniProtKB-UniRule"/>
</dbReference>
<dbReference type="GO" id="GO:0044183">
    <property type="term" value="F:protein folding chaperone"/>
    <property type="evidence" value="ECO:0007669"/>
    <property type="project" value="TreeGrafter"/>
</dbReference>
<dbReference type="GO" id="GO:0043022">
    <property type="term" value="F:ribosome binding"/>
    <property type="evidence" value="ECO:0007669"/>
    <property type="project" value="TreeGrafter"/>
</dbReference>
<dbReference type="GO" id="GO:0051083">
    <property type="term" value="P:'de novo' cotranslational protein folding"/>
    <property type="evidence" value="ECO:0007669"/>
    <property type="project" value="TreeGrafter"/>
</dbReference>
<dbReference type="GO" id="GO:0051301">
    <property type="term" value="P:cell division"/>
    <property type="evidence" value="ECO:0007669"/>
    <property type="project" value="UniProtKB-KW"/>
</dbReference>
<dbReference type="GO" id="GO:0061077">
    <property type="term" value="P:chaperone-mediated protein folding"/>
    <property type="evidence" value="ECO:0007669"/>
    <property type="project" value="TreeGrafter"/>
</dbReference>
<dbReference type="GO" id="GO:0015031">
    <property type="term" value="P:protein transport"/>
    <property type="evidence" value="ECO:0007669"/>
    <property type="project" value="UniProtKB-UniRule"/>
</dbReference>
<dbReference type="GO" id="GO:0043335">
    <property type="term" value="P:protein unfolding"/>
    <property type="evidence" value="ECO:0007669"/>
    <property type="project" value="TreeGrafter"/>
</dbReference>
<dbReference type="FunFam" id="3.10.50.40:FF:000001">
    <property type="entry name" value="Trigger factor"/>
    <property type="match status" value="1"/>
</dbReference>
<dbReference type="FunFam" id="3.30.70.1050:FF:000002">
    <property type="entry name" value="Trigger factor"/>
    <property type="match status" value="1"/>
</dbReference>
<dbReference type="Gene3D" id="3.10.50.40">
    <property type="match status" value="1"/>
</dbReference>
<dbReference type="Gene3D" id="3.30.70.1050">
    <property type="entry name" value="Trigger factor ribosome-binding domain"/>
    <property type="match status" value="1"/>
</dbReference>
<dbReference type="Gene3D" id="1.10.3120.10">
    <property type="entry name" value="Trigger factor, C-terminal domain"/>
    <property type="match status" value="1"/>
</dbReference>
<dbReference type="HAMAP" id="MF_00303">
    <property type="entry name" value="Trigger_factor_Tig"/>
    <property type="match status" value="1"/>
</dbReference>
<dbReference type="InterPro" id="IPR046357">
    <property type="entry name" value="PPIase_dom_sf"/>
</dbReference>
<dbReference type="InterPro" id="IPR001179">
    <property type="entry name" value="PPIase_FKBP_dom"/>
</dbReference>
<dbReference type="InterPro" id="IPR005215">
    <property type="entry name" value="Trig_fac"/>
</dbReference>
<dbReference type="InterPro" id="IPR008880">
    <property type="entry name" value="Trigger_fac_C"/>
</dbReference>
<dbReference type="InterPro" id="IPR037041">
    <property type="entry name" value="Trigger_fac_C_sf"/>
</dbReference>
<dbReference type="InterPro" id="IPR008881">
    <property type="entry name" value="Trigger_fac_ribosome-bd_bac"/>
</dbReference>
<dbReference type="InterPro" id="IPR036611">
    <property type="entry name" value="Trigger_fac_ribosome-bd_sf"/>
</dbReference>
<dbReference type="InterPro" id="IPR027304">
    <property type="entry name" value="Trigger_fact/SurA_dom_sf"/>
</dbReference>
<dbReference type="NCBIfam" id="TIGR00115">
    <property type="entry name" value="tig"/>
    <property type="match status" value="1"/>
</dbReference>
<dbReference type="PANTHER" id="PTHR30560">
    <property type="entry name" value="TRIGGER FACTOR CHAPERONE AND PEPTIDYL-PROLYL CIS/TRANS ISOMERASE"/>
    <property type="match status" value="1"/>
</dbReference>
<dbReference type="PANTHER" id="PTHR30560:SF3">
    <property type="entry name" value="TRIGGER FACTOR-LIKE PROTEIN TIG, CHLOROPLASTIC"/>
    <property type="match status" value="1"/>
</dbReference>
<dbReference type="Pfam" id="PF00254">
    <property type="entry name" value="FKBP_C"/>
    <property type="match status" value="1"/>
</dbReference>
<dbReference type="Pfam" id="PF05698">
    <property type="entry name" value="Trigger_C"/>
    <property type="match status" value="1"/>
</dbReference>
<dbReference type="Pfam" id="PF05697">
    <property type="entry name" value="Trigger_N"/>
    <property type="match status" value="1"/>
</dbReference>
<dbReference type="PIRSF" id="PIRSF003095">
    <property type="entry name" value="Trigger_factor"/>
    <property type="match status" value="1"/>
</dbReference>
<dbReference type="SUPFAM" id="SSF54534">
    <property type="entry name" value="FKBP-like"/>
    <property type="match status" value="1"/>
</dbReference>
<dbReference type="SUPFAM" id="SSF109998">
    <property type="entry name" value="Triger factor/SurA peptide-binding domain-like"/>
    <property type="match status" value="1"/>
</dbReference>
<dbReference type="SUPFAM" id="SSF102735">
    <property type="entry name" value="Trigger factor ribosome-binding domain"/>
    <property type="match status" value="1"/>
</dbReference>
<dbReference type="PROSITE" id="PS50059">
    <property type="entry name" value="FKBP_PPIASE"/>
    <property type="match status" value="1"/>
</dbReference>
<comment type="function">
    <text evidence="1">Involved in protein export. Acts as a chaperone by maintaining the newly synthesized protein in an open conformation. Functions as a peptidyl-prolyl cis-trans isomerase.</text>
</comment>
<comment type="catalytic activity">
    <reaction evidence="1">
        <text>[protein]-peptidylproline (omega=180) = [protein]-peptidylproline (omega=0)</text>
        <dbReference type="Rhea" id="RHEA:16237"/>
        <dbReference type="Rhea" id="RHEA-COMP:10747"/>
        <dbReference type="Rhea" id="RHEA-COMP:10748"/>
        <dbReference type="ChEBI" id="CHEBI:83833"/>
        <dbReference type="ChEBI" id="CHEBI:83834"/>
        <dbReference type="EC" id="5.2.1.8"/>
    </reaction>
</comment>
<comment type="subcellular location">
    <subcellularLocation>
        <location>Cytoplasm</location>
    </subcellularLocation>
    <text evidence="1">About half TF is bound to the ribosome near the polypeptide exit tunnel while the other half is free in the cytoplasm.</text>
</comment>
<comment type="domain">
    <text evidence="1">Consists of 3 domains; the N-terminus binds the ribosome, the middle domain has PPIase activity, while the C-terminus has intrinsic chaperone activity on its own.</text>
</comment>
<comment type="similarity">
    <text evidence="1">Belongs to the FKBP-type PPIase family. Tig subfamily.</text>
</comment>
<organism>
    <name type="scientific">Bacillus cereus (strain AH820)</name>
    <dbReference type="NCBI Taxonomy" id="405535"/>
    <lineage>
        <taxon>Bacteria</taxon>
        <taxon>Bacillati</taxon>
        <taxon>Bacillota</taxon>
        <taxon>Bacilli</taxon>
        <taxon>Bacillales</taxon>
        <taxon>Bacillaceae</taxon>
        <taxon>Bacillus</taxon>
        <taxon>Bacillus cereus group</taxon>
    </lineage>
</organism>
<proteinExistence type="inferred from homology"/>
<protein>
    <recommendedName>
        <fullName evidence="1">Trigger factor</fullName>
        <shortName evidence="1">TF</shortName>
        <ecNumber evidence="1">5.2.1.8</ecNumber>
    </recommendedName>
    <alternativeName>
        <fullName evidence="1">PPIase</fullName>
    </alternativeName>
</protein>
<evidence type="ECO:0000255" key="1">
    <source>
        <dbReference type="HAMAP-Rule" id="MF_00303"/>
    </source>
</evidence>
<accession>B7JQ66</accession>
<gene>
    <name evidence="1" type="primary">tig</name>
    <name type="ordered locus">BCAH820_4560</name>
</gene>
<sequence>MAAKWEKLEGNVGVLTIEVDAKEVNNSIDAAFKKVVKTINVPGFRKGKMPRPLFEQRFGIESLYQDALDIILPKAYGEAIDEAGIFPVAHPEIDIEKFEKNANLIFTAKVTVKPEVKLGEYKGLAVEKVETTVTDEDVENELKSLQERQAELVVKEEGTVENGDTAVIDFEGFVDGEAFEGGKGENYSLAIGSGTFIPGFEEQVIGLKSGESKDVEVSFPEEYHAAELAGKPATFKVTVHEIKTKELPELNDEFAKEADEAVATLDELKAKLRTNLEEGKKHEAEHKVRDEVVELAAANAEIDIPEAMIDTELDRMVREFEQRLSQQGMNLELYYQFTGTDADKLKEQMKEDAQKRVRINLVLEAIIEAENIEVTEEEVTAEVEKMAEMYGMPVDAIKQALGSVDALAEDLKVRKAVDFLVENAA</sequence>
<feature type="chain" id="PRO_1000119508" description="Trigger factor">
    <location>
        <begin position="1"/>
        <end position="425"/>
    </location>
</feature>
<feature type="domain" description="PPIase FKBP-type" evidence="1">
    <location>
        <begin position="163"/>
        <end position="248"/>
    </location>
</feature>
<reference key="1">
    <citation type="submission" date="2008-10" db="EMBL/GenBank/DDBJ databases">
        <title>Genome sequence of Bacillus cereus AH820.</title>
        <authorList>
            <person name="Dodson R.J."/>
            <person name="Durkin A.S."/>
            <person name="Rosovitz M.J."/>
            <person name="Rasko D.A."/>
            <person name="Hoffmaster A."/>
            <person name="Ravel J."/>
            <person name="Sutton G."/>
        </authorList>
    </citation>
    <scope>NUCLEOTIDE SEQUENCE [LARGE SCALE GENOMIC DNA]</scope>
    <source>
        <strain>AH820</strain>
    </source>
</reference>